<gene>
    <name evidence="1" type="primary">arm</name>
    <name type="ORF">AAEL002887</name>
</gene>
<sequence length="832" mass="90307">MSYQMPQNRTMSHNPYNSSDMPMPSAKEQTLMWQQNSYLGDSGIHSGAVTQVPSLSGKDDDMEDDPLMFDMDQGFSQNFTQDQVDDMNQQLSQTRSQRVRAAMFPETLEEGIEIPSTQFDPQQPTAVQRLSEPSQMLKHAVVNLINYQDDADLATRAIPELIKLLNDEDQVVVSQAAMMVHQLSKKEASRHAIMNSPQMVAALVRALSQSNDLETTKGAVGTLHNLSHHRQGLLAIFKSGGIPALVKLLSSPVESVLFYAITTLHNLLLHQDGSKMAVRLAGGLQKMVALLQRNNVKFLAIVTDCLQILAYGNQESKLIILASTGPSELVRIMRSYDYEKLLWTTSRVLKVLSVCSSNKPAIVEAGGMQALAMHLGNPSQRLVQNCLWTLRNLSDAATKVDGLETLLSGLVTVLGSSDVNVVTCAAGILSNLTCNNQRNKVTVCQVGGVEALVGTIINAGDREEITEPAVCALRHLTSRHPESESAQNIVRNGYGLPVIVKLLNPPSRWPLIKAVIGLIRNLALCPSNAAPLREHGAIHLLVRLLFKAFQDTQRQRSSVATNGSQPPGAYADGVRMEEIVEGTVGALHILSKEELNRQLIRQQNVISIFVQLLFYNDIENIQRVAAGVLCELAVDKEVAEMIEAEGATAPLTELLNSANEGVATYAAAVLFKMSEDKSMDYKKRFSSELTTLPVFRDDTMWNNGELGIGPDLQDILSPDQAYEGLYGQGPPSVHSSHGGRAFQQGYDTLPIDSMQGLEIGGGGNAGPAGSNPNAGNNPGAGGPPSGQPTSPYAMDMDVGEMDASELTFDHLDVMPSPPQDNNQVAAWYDTDL</sequence>
<keyword id="KW-0130">Cell adhesion</keyword>
<keyword id="KW-0965">Cell junction</keyword>
<keyword id="KW-1003">Cell membrane</keyword>
<keyword id="KW-0963">Cytoplasm</keyword>
<keyword id="KW-0217">Developmental protein</keyword>
<keyword id="KW-0472">Membrane</keyword>
<keyword id="KW-1185">Reference proteome</keyword>
<keyword id="KW-0677">Repeat</keyword>
<keyword id="KW-0709">Segmentation polarity protein</keyword>
<keyword id="KW-0879">Wnt signaling pathway</keyword>
<organism>
    <name type="scientific">Aedes aegypti</name>
    <name type="common">Yellowfever mosquito</name>
    <name type="synonym">Culex aegypti</name>
    <dbReference type="NCBI Taxonomy" id="7159"/>
    <lineage>
        <taxon>Eukaryota</taxon>
        <taxon>Metazoa</taxon>
        <taxon>Ecdysozoa</taxon>
        <taxon>Arthropoda</taxon>
        <taxon>Hexapoda</taxon>
        <taxon>Insecta</taxon>
        <taxon>Pterygota</taxon>
        <taxon>Neoptera</taxon>
        <taxon>Endopterygota</taxon>
        <taxon>Diptera</taxon>
        <taxon>Nematocera</taxon>
        <taxon>Culicoidea</taxon>
        <taxon>Culicidae</taxon>
        <taxon>Culicinae</taxon>
        <taxon>Aedini</taxon>
        <taxon>Aedes</taxon>
        <taxon>Stegomyia</taxon>
    </lineage>
</organism>
<comment type="function">
    <text evidence="1">May associate with CadN and participate in the transmission of developmental information. Can associate with alpha-catenin. Accumulates through wg signaling; arm function in wg signal transduction is required early in development for determination of neuroblast fate. Arm and Abl proteins function cooperatively at adherens junctions in both the CNS and epidermis (By similarity).</text>
</comment>
<comment type="subcellular location">
    <subcellularLocation>
        <location evidence="1">Cytoplasm</location>
    </subcellularLocation>
    <subcellularLocation>
        <location evidence="1">Cell membrane</location>
        <topology evidence="1">Peripheral membrane protein</topology>
        <orientation evidence="1">Cytoplasmic side</orientation>
    </subcellularLocation>
    <subcellularLocation>
        <location evidence="1">Cell junction</location>
        <location evidence="1">Adherens junction</location>
    </subcellularLocation>
    <text evidence="1">Inner surface of cell membrane and adherens junction.</text>
</comment>
<comment type="similarity">
    <text evidence="2">Belongs to the beta-catenin family.</text>
</comment>
<evidence type="ECO:0000250" key="1">
    <source>
        <dbReference type="UniProtKB" id="P18824"/>
    </source>
</evidence>
<evidence type="ECO:0000255" key="2"/>
<evidence type="ECO:0000256" key="3">
    <source>
        <dbReference type="SAM" id="MobiDB-lite"/>
    </source>
</evidence>
<evidence type="ECO:0000312" key="4">
    <source>
        <dbReference type="EMBL" id="EAT45858.1"/>
    </source>
</evidence>
<protein>
    <recommendedName>
        <fullName>Armadillo segment polarity protein</fullName>
    </recommendedName>
</protein>
<feature type="chain" id="PRO_0000312833" description="Armadillo segment polarity protein">
    <location>
        <begin position="1"/>
        <end position="832"/>
    </location>
</feature>
<feature type="repeat" description="ARM 1" evidence="2">
    <location>
        <begin position="146"/>
        <end position="185"/>
    </location>
</feature>
<feature type="repeat" description="ARM 2" evidence="2">
    <location>
        <begin position="188"/>
        <end position="228"/>
    </location>
</feature>
<feature type="repeat" description="ARM 3" evidence="2">
    <location>
        <begin position="230"/>
        <end position="269"/>
    </location>
</feature>
<feature type="repeat" description="ARM 4" evidence="2">
    <location>
        <begin position="272"/>
        <end position="311"/>
    </location>
</feature>
<feature type="repeat" description="ARM 5" evidence="2">
    <location>
        <begin position="356"/>
        <end position="395"/>
    </location>
</feature>
<feature type="repeat" description="ARM 6" evidence="2">
    <location>
        <begin position="397"/>
        <end position="434"/>
    </location>
</feature>
<feature type="repeat" description="ARM 7" evidence="2">
    <location>
        <begin position="483"/>
        <end position="524"/>
    </location>
</feature>
<feature type="repeat" description="ARM 8" evidence="2">
    <location>
        <begin position="594"/>
        <end position="634"/>
    </location>
</feature>
<feature type="repeat" description="ARM 9" evidence="2">
    <location>
        <begin position="636"/>
        <end position="675"/>
    </location>
</feature>
<feature type="region of interest" description="Disordered" evidence="3">
    <location>
        <begin position="1"/>
        <end position="24"/>
    </location>
</feature>
<feature type="region of interest" description="Disordered" evidence="3">
    <location>
        <begin position="721"/>
        <end position="832"/>
    </location>
</feature>
<feature type="compositionally biased region" description="Polar residues" evidence="3">
    <location>
        <begin position="1"/>
        <end position="20"/>
    </location>
</feature>
<feature type="compositionally biased region" description="Low complexity" evidence="3">
    <location>
        <begin position="767"/>
        <end position="777"/>
    </location>
</feature>
<accession>Q17GS9</accession>
<proteinExistence type="inferred from homology"/>
<reference evidence="4" key="1">
    <citation type="journal article" date="2007" name="Science">
        <title>Genome sequence of Aedes aegypti, a major arbovirus vector.</title>
        <authorList>
            <person name="Nene V."/>
            <person name="Wortman J.R."/>
            <person name="Lawson D."/>
            <person name="Haas B.J."/>
            <person name="Kodira C.D."/>
            <person name="Tu Z.J."/>
            <person name="Loftus B.J."/>
            <person name="Xi Z."/>
            <person name="Megy K."/>
            <person name="Grabherr M."/>
            <person name="Ren Q."/>
            <person name="Zdobnov E.M."/>
            <person name="Lobo N.F."/>
            <person name="Campbell K.S."/>
            <person name="Brown S.E."/>
            <person name="Bonaldo M.F."/>
            <person name="Zhu J."/>
            <person name="Sinkins S.P."/>
            <person name="Hogenkamp D.G."/>
            <person name="Amedeo P."/>
            <person name="Arensburger P."/>
            <person name="Atkinson P.W."/>
            <person name="Bidwell S.L."/>
            <person name="Biedler J."/>
            <person name="Birney E."/>
            <person name="Bruggner R.V."/>
            <person name="Costas J."/>
            <person name="Coy M.R."/>
            <person name="Crabtree J."/>
            <person name="Crawford M."/>
            <person name="DeBruyn B."/>
            <person name="DeCaprio D."/>
            <person name="Eiglmeier K."/>
            <person name="Eisenstadt E."/>
            <person name="El-Dorry H."/>
            <person name="Gelbart W.M."/>
            <person name="Gomes S.L."/>
            <person name="Hammond M."/>
            <person name="Hannick L.I."/>
            <person name="Hogan J.R."/>
            <person name="Holmes M.H."/>
            <person name="Jaffe D."/>
            <person name="Johnston S.J."/>
            <person name="Kennedy R.C."/>
            <person name="Koo H."/>
            <person name="Kravitz S."/>
            <person name="Kriventseva E.V."/>
            <person name="Kulp D."/>
            <person name="Labutti K."/>
            <person name="Lee E."/>
            <person name="Li S."/>
            <person name="Lovin D.D."/>
            <person name="Mao C."/>
            <person name="Mauceli E."/>
            <person name="Menck C.F."/>
            <person name="Miller J.R."/>
            <person name="Montgomery P."/>
            <person name="Mori A."/>
            <person name="Nascimento A.L."/>
            <person name="Naveira H.F."/>
            <person name="Nusbaum C."/>
            <person name="O'Leary S.B."/>
            <person name="Orvis J."/>
            <person name="Pertea M."/>
            <person name="Quesneville H."/>
            <person name="Reidenbach K.R."/>
            <person name="Rogers Y.-H.C."/>
            <person name="Roth C.W."/>
            <person name="Schneider J.R."/>
            <person name="Schatz M."/>
            <person name="Shumway M."/>
            <person name="Stanke M."/>
            <person name="Stinson E.O."/>
            <person name="Tubio J.M.C."/>
            <person name="Vanzee J.P."/>
            <person name="Verjovski-Almeida S."/>
            <person name="Werner D."/>
            <person name="White O.R."/>
            <person name="Wyder S."/>
            <person name="Zeng Q."/>
            <person name="Zhao Q."/>
            <person name="Zhao Y."/>
            <person name="Hill C.A."/>
            <person name="Raikhel A.S."/>
            <person name="Soares M.B."/>
            <person name="Knudson D.L."/>
            <person name="Lee N.H."/>
            <person name="Galagan J."/>
            <person name="Salzberg S.L."/>
            <person name="Paulsen I.T."/>
            <person name="Dimopoulos G."/>
            <person name="Collins F.H."/>
            <person name="Bruce B."/>
            <person name="Fraser-Liggett C.M."/>
            <person name="Severson D.W."/>
        </authorList>
    </citation>
    <scope>NUCLEOTIDE SEQUENCE [LARGE SCALE GENOMIC DNA]</scope>
    <source>
        <strain>LVPib12</strain>
    </source>
</reference>
<dbReference type="EMBL" id="CH477256">
    <property type="protein sequence ID" value="EAT45858.1"/>
    <property type="molecule type" value="Genomic_DNA"/>
</dbReference>
<dbReference type="SMR" id="Q17GS9"/>
<dbReference type="FunCoup" id="Q17GS9">
    <property type="interactions" value="1625"/>
</dbReference>
<dbReference type="STRING" id="7159.Q17GS9"/>
<dbReference type="PaxDb" id="7159-AAEL002887-PA"/>
<dbReference type="EnsemblMetazoa" id="AAEL002887-RA">
    <property type="protein sequence ID" value="AAEL002887-PA"/>
    <property type="gene ID" value="AAEL002887"/>
</dbReference>
<dbReference type="EnsemblMetazoa" id="AAEL002887-RB">
    <property type="protein sequence ID" value="AAEL002887-PB"/>
    <property type="gene ID" value="AAEL002887"/>
</dbReference>
<dbReference type="EnsemblMetazoa" id="AAEL002887-RC">
    <property type="protein sequence ID" value="AAEL002887-PC"/>
    <property type="gene ID" value="AAEL002887"/>
</dbReference>
<dbReference type="GeneID" id="5576477"/>
<dbReference type="KEGG" id="aag:5576477"/>
<dbReference type="VEuPathDB" id="VectorBase:AAEL002887"/>
<dbReference type="eggNOG" id="KOG4203">
    <property type="taxonomic scope" value="Eukaryota"/>
</dbReference>
<dbReference type="HOGENOM" id="CLU_008757_1_1_1"/>
<dbReference type="InParanoid" id="Q17GS9"/>
<dbReference type="OMA" id="DPLMFDM"/>
<dbReference type="OrthoDB" id="195736at2759"/>
<dbReference type="PhylomeDB" id="Q17GS9"/>
<dbReference type="Proteomes" id="UP000008820">
    <property type="component" value="Chromosome 1"/>
</dbReference>
<dbReference type="Proteomes" id="UP000682892">
    <property type="component" value="Chromosome 1"/>
</dbReference>
<dbReference type="GO" id="GO:0005912">
    <property type="term" value="C:adherens junction"/>
    <property type="evidence" value="ECO:0000250"/>
    <property type="project" value="UniProtKB"/>
</dbReference>
<dbReference type="GO" id="GO:0005737">
    <property type="term" value="C:cytoplasm"/>
    <property type="evidence" value="ECO:0007669"/>
    <property type="project" value="UniProtKB-SubCell"/>
</dbReference>
<dbReference type="GO" id="GO:0005886">
    <property type="term" value="C:plasma membrane"/>
    <property type="evidence" value="ECO:0007669"/>
    <property type="project" value="UniProtKB-SubCell"/>
</dbReference>
<dbReference type="GO" id="GO:0045296">
    <property type="term" value="F:cadherin binding"/>
    <property type="evidence" value="ECO:0000250"/>
    <property type="project" value="UniProtKB"/>
</dbReference>
<dbReference type="GO" id="GO:0060070">
    <property type="term" value="P:canonical Wnt signaling pathway"/>
    <property type="evidence" value="ECO:0000250"/>
    <property type="project" value="UniProtKB"/>
</dbReference>
<dbReference type="GO" id="GO:0007155">
    <property type="term" value="P:cell adhesion"/>
    <property type="evidence" value="ECO:0007669"/>
    <property type="project" value="UniProtKB-KW"/>
</dbReference>
<dbReference type="GO" id="GO:0014017">
    <property type="term" value="P:neuroblast fate commitment"/>
    <property type="evidence" value="ECO:0000250"/>
    <property type="project" value="UniProtKB"/>
</dbReference>
<dbReference type="GO" id="GO:0007367">
    <property type="term" value="P:segment polarity determination"/>
    <property type="evidence" value="ECO:0007669"/>
    <property type="project" value="UniProtKB-KW"/>
</dbReference>
<dbReference type="CDD" id="cd21726">
    <property type="entry name" value="CTNNAbd_dArm"/>
    <property type="match status" value="1"/>
</dbReference>
<dbReference type="FunFam" id="1.25.10.10:FF:000015">
    <property type="entry name" value="Catenin beta-1"/>
    <property type="match status" value="1"/>
</dbReference>
<dbReference type="Gene3D" id="1.25.10.10">
    <property type="entry name" value="Leucine-rich Repeat Variant"/>
    <property type="match status" value="1"/>
</dbReference>
<dbReference type="InterPro" id="IPR011989">
    <property type="entry name" value="ARM-like"/>
</dbReference>
<dbReference type="InterPro" id="IPR016024">
    <property type="entry name" value="ARM-type_fold"/>
</dbReference>
<dbReference type="InterPro" id="IPR000225">
    <property type="entry name" value="Armadillo"/>
</dbReference>
<dbReference type="InterPro" id="IPR013284">
    <property type="entry name" value="Beta-catenin"/>
</dbReference>
<dbReference type="PANTHER" id="PTHR45976">
    <property type="entry name" value="ARMADILLO SEGMENT POLARITY PROTEIN"/>
    <property type="match status" value="1"/>
</dbReference>
<dbReference type="Pfam" id="PF00514">
    <property type="entry name" value="Arm"/>
    <property type="match status" value="4"/>
</dbReference>
<dbReference type="PRINTS" id="PR01869">
    <property type="entry name" value="BCATNINFAMLY"/>
</dbReference>
<dbReference type="SMART" id="SM00185">
    <property type="entry name" value="ARM"/>
    <property type="match status" value="11"/>
</dbReference>
<dbReference type="SUPFAM" id="SSF48371">
    <property type="entry name" value="ARM repeat"/>
    <property type="match status" value="1"/>
</dbReference>
<dbReference type="PROSITE" id="PS50176">
    <property type="entry name" value="ARM_REPEAT"/>
    <property type="match status" value="9"/>
</dbReference>
<name>ARM_AEDAE</name>